<comment type="function">
    <text>Carrier of the growing fatty acid chain in fatty acid biosynthesis.</text>
</comment>
<comment type="pathway">
    <text>Lipid metabolism; fatty acid biosynthesis.</text>
</comment>
<comment type="subcellular location">
    <subcellularLocation>
        <location>Plastid</location>
        <location>Chloroplast</location>
    </subcellularLocation>
</comment>
<comment type="PTM">
    <text evidence="1">4'-phosphopantetheine is transferred from CoA to a specific serine of apo-ACP by acpS. This modification is essential for activity because fatty acids are bound in thioester linkage to the sulfhydryl of the prosthetic group (By similarity).</text>
</comment>
<comment type="similarity">
    <text evidence="3">Belongs to the acyl carrier protein (ACP) family.</text>
</comment>
<dbReference type="EMBL" id="Y00418">
    <property type="protein sequence ID" value="CAA68475.1"/>
    <property type="molecule type" value="mRNA"/>
</dbReference>
<dbReference type="EMBL" id="X70337">
    <property type="protein sequence ID" value="CAA49803.1"/>
    <property type="molecule type" value="Genomic_DNA"/>
</dbReference>
<dbReference type="EMBL" id="S84968">
    <property type="protein sequence ID" value="AAB21541.1"/>
    <property type="molecule type" value="Genomic_DNA"/>
</dbReference>
<dbReference type="PIR" id="A26860">
    <property type="entry name" value="A26860"/>
</dbReference>
<dbReference type="PIR" id="S20499">
    <property type="entry name" value="S20499"/>
</dbReference>
<dbReference type="RefSeq" id="NP_001288921.1">
    <property type="nucleotide sequence ID" value="NM_001301992.1"/>
</dbReference>
<dbReference type="SMR" id="P07088"/>
<dbReference type="EnsemblPlants" id="Bra039471.1">
    <property type="protein sequence ID" value="Bra039471.1-P"/>
    <property type="gene ID" value="Bra039471"/>
</dbReference>
<dbReference type="GeneID" id="103870868"/>
<dbReference type="Gramene" id="Bra039471.1">
    <property type="protein sequence ID" value="Bra039471.1-P"/>
    <property type="gene ID" value="Bra039471"/>
</dbReference>
<dbReference type="KEGG" id="brp:103870868"/>
<dbReference type="OMA" id="NVAFRMQ"/>
<dbReference type="OrthoDB" id="448946at2759"/>
<dbReference type="UniPathway" id="UPA00094"/>
<dbReference type="Proteomes" id="UP000011750">
    <property type="component" value="Chromosome A05"/>
</dbReference>
<dbReference type="GO" id="GO:0009507">
    <property type="term" value="C:chloroplast"/>
    <property type="evidence" value="ECO:0007669"/>
    <property type="project" value="UniProtKB-SubCell"/>
</dbReference>
<dbReference type="GO" id="GO:0000036">
    <property type="term" value="F:acyl carrier activity"/>
    <property type="evidence" value="ECO:0007669"/>
    <property type="project" value="InterPro"/>
</dbReference>
<dbReference type="GO" id="GO:0031177">
    <property type="term" value="F:phosphopantetheine binding"/>
    <property type="evidence" value="ECO:0007669"/>
    <property type="project" value="InterPro"/>
</dbReference>
<dbReference type="FunFam" id="1.10.1200.10:FF:000017">
    <property type="entry name" value="Acyl carrier protein"/>
    <property type="match status" value="1"/>
</dbReference>
<dbReference type="Gene3D" id="1.10.1200.10">
    <property type="entry name" value="ACP-like"/>
    <property type="match status" value="1"/>
</dbReference>
<dbReference type="HAMAP" id="MF_01217">
    <property type="entry name" value="Acyl_carrier"/>
    <property type="match status" value="1"/>
</dbReference>
<dbReference type="InterPro" id="IPR003231">
    <property type="entry name" value="ACP"/>
</dbReference>
<dbReference type="InterPro" id="IPR036736">
    <property type="entry name" value="ACP-like_sf"/>
</dbReference>
<dbReference type="InterPro" id="IPR044813">
    <property type="entry name" value="ACP_chloroplastic"/>
</dbReference>
<dbReference type="InterPro" id="IPR020806">
    <property type="entry name" value="PKS_PP-bd"/>
</dbReference>
<dbReference type="InterPro" id="IPR009081">
    <property type="entry name" value="PP-bd_ACP"/>
</dbReference>
<dbReference type="InterPro" id="IPR006162">
    <property type="entry name" value="Ppantetheine_attach_site"/>
</dbReference>
<dbReference type="NCBIfam" id="TIGR00517">
    <property type="entry name" value="acyl_carrier"/>
    <property type="match status" value="1"/>
</dbReference>
<dbReference type="NCBIfam" id="NF002148">
    <property type="entry name" value="PRK00982.1-2"/>
    <property type="match status" value="1"/>
</dbReference>
<dbReference type="PANTHER" id="PTHR46153">
    <property type="entry name" value="ACYL CARRIER PROTEIN"/>
    <property type="match status" value="1"/>
</dbReference>
<dbReference type="PANTHER" id="PTHR46153:SF9">
    <property type="entry name" value="ACYL CARRIER PROTEIN 1, CHLOROPLASTIC"/>
    <property type="match status" value="1"/>
</dbReference>
<dbReference type="Pfam" id="PF00550">
    <property type="entry name" value="PP-binding"/>
    <property type="match status" value="1"/>
</dbReference>
<dbReference type="SMART" id="SM00823">
    <property type="entry name" value="PKS_PP"/>
    <property type="match status" value="1"/>
</dbReference>
<dbReference type="SUPFAM" id="SSF47336">
    <property type="entry name" value="ACP-like"/>
    <property type="match status" value="1"/>
</dbReference>
<dbReference type="PROSITE" id="PS50075">
    <property type="entry name" value="CARRIER"/>
    <property type="match status" value="1"/>
</dbReference>
<dbReference type="PROSITE" id="PS00012">
    <property type="entry name" value="PHOSPHOPANTETHEINE"/>
    <property type="match status" value="1"/>
</dbReference>
<proteinExistence type="evidence at transcript level"/>
<feature type="transit peptide" description="Chloroplast">
    <location>
        <begin position="1"/>
        <end position="51"/>
    </location>
</feature>
<feature type="chain" id="PRO_0000000571" description="Acyl carrier protein SF2, chloroplastic">
    <location>
        <begin position="52"/>
        <end position="134"/>
    </location>
</feature>
<feature type="domain" description="Carrier" evidence="2">
    <location>
        <begin position="55"/>
        <end position="130"/>
    </location>
</feature>
<feature type="modified residue" description="O-(pantetheine 4'-phosphoryl)serine" evidence="2">
    <location>
        <position position="90"/>
    </location>
</feature>
<protein>
    <recommendedName>
        <fullName>Acyl carrier protein SF2, chloroplastic</fullName>
        <shortName>ACP</shortName>
    </recommendedName>
</protein>
<keyword id="KW-0150">Chloroplast</keyword>
<keyword id="KW-0275">Fatty acid biosynthesis</keyword>
<keyword id="KW-0276">Fatty acid metabolism</keyword>
<keyword id="KW-0444">Lipid biosynthesis</keyword>
<keyword id="KW-0443">Lipid metabolism</keyword>
<keyword id="KW-0596">Phosphopantetheine</keyword>
<keyword id="KW-0597">Phosphoprotein</keyword>
<keyword id="KW-0934">Plastid</keyword>
<keyword id="KW-1185">Reference proteome</keyword>
<keyword id="KW-0809">Transit peptide</keyword>
<sequence>MSTTFCSSVSMQATSLAATTRISFQKPALVSTTNLSFNLRRSIPTRFSISCAAKPETVEKVSKIVKKQLSLKDDQKVVAETKFADLGADSLDTVEIVMGLEEEFDIEMAEEKAQKIATVEEAAELIEELVQLKK</sequence>
<organism>
    <name type="scientific">Brassica campestris</name>
    <name type="common">Field mustard</name>
    <dbReference type="NCBI Taxonomy" id="3711"/>
    <lineage>
        <taxon>Eukaryota</taxon>
        <taxon>Viridiplantae</taxon>
        <taxon>Streptophyta</taxon>
        <taxon>Embryophyta</taxon>
        <taxon>Tracheophyta</taxon>
        <taxon>Spermatophyta</taxon>
        <taxon>Magnoliopsida</taxon>
        <taxon>eudicotyledons</taxon>
        <taxon>Gunneridae</taxon>
        <taxon>Pentapetalae</taxon>
        <taxon>rosids</taxon>
        <taxon>malvids</taxon>
        <taxon>Brassicales</taxon>
        <taxon>Brassicaceae</taxon>
        <taxon>Brassiceae</taxon>
        <taxon>Brassica</taxon>
    </lineage>
</organism>
<accession>P07088</accession>
<evidence type="ECO:0000250" key="1"/>
<evidence type="ECO:0000255" key="2">
    <source>
        <dbReference type="PROSITE-ProRule" id="PRU00258"/>
    </source>
</evidence>
<evidence type="ECO:0000305" key="3"/>
<reference key="1">
    <citation type="journal article" date="1987" name="Nucleic Acids Res.">
        <title>The nucleotide sequence of a cDNA clone encoding acyl carrier protein (ACP) from Brassica campestris seeds.</title>
        <authorList>
            <person name="Rose R.E."/>
            <person name="Dejesus C.E."/>
            <person name="Moylan S.L."/>
            <person name="Ridge N.P."/>
            <person name="Scherer D.E."/>
            <person name="Knauf V.C."/>
        </authorList>
    </citation>
    <scope>NUCLEOTIDE SEQUENCE [MRNA]</scope>
    <source>
        <tissue>Seed</tissue>
    </source>
</reference>
<reference key="2">
    <citation type="journal article" date="1992" name="Plant Mol. Biol.">
        <title>Non-essential repeats in the promoter region of a Brassica rapa acyl carrier protein gene expressed in developing embryos.</title>
        <authorList>
            <person name="Scherer D."/>
            <person name="Sato A."/>
            <person name="McCarter D.W."/>
            <person name="Radke S.E."/>
            <person name="Kridl J.C."/>
            <person name="Knauf V.C."/>
        </authorList>
    </citation>
    <scope>NUCLEOTIDE SEQUENCE</scope>
</reference>
<reference key="3">
    <citation type="journal article" date="1995" name="Biochim. Biophys. Acta">
        <title>Molecular cloning and sequence analysis of a seed-expressed acyl carrier protein (ACP) gene from Brassica campestris (Agrani).</title>
        <authorList>
            <person name="Das N."/>
            <person name="Ghosh S."/>
        </authorList>
    </citation>
    <scope>NUCLEOTIDE SEQUENCE [GENOMIC DNA]</scope>
    <source>
        <strain>cv. B-54</strain>
        <tissue>Cotyledon</tissue>
    </source>
</reference>
<name>ACP_BRACM</name>
<gene>
    <name type="primary">Acl1.1</name>
    <name type="synonym">Bcg4-4</name>
</gene>